<geneLocation type="apicoplast"/>
<proteinExistence type="inferred from homology"/>
<protein>
    <recommendedName>
        <fullName>DNA-directed RNA polymerase subunit beta</fullName>
        <ecNumber>2.7.7.6</ecNumber>
    </recommendedName>
    <alternativeName>
        <fullName>PEP</fullName>
    </alternativeName>
    <alternativeName>
        <fullName>Plastid-encoded RNA polymerase subunit beta</fullName>
        <shortName>RNA polymerase subunit beta</shortName>
    </alternativeName>
</protein>
<evidence type="ECO:0000250" key="1"/>
<evidence type="ECO:0000305" key="2"/>
<gene>
    <name type="primary">rpoB</name>
    <name type="ordered locus">TP05_0028</name>
</gene>
<accession>Q4MY95</accession>
<dbReference type="EC" id="2.7.7.6"/>
<dbReference type="EMBL" id="AAGK01000009">
    <property type="protein sequence ID" value="EAN30414.1"/>
    <property type="molecule type" value="Genomic_DNA"/>
</dbReference>
<dbReference type="RefSeq" id="XP_762697.1">
    <property type="nucleotide sequence ID" value="XM_757604.1"/>
</dbReference>
<dbReference type="SMR" id="Q4MY95"/>
<dbReference type="FunCoup" id="Q4MY95">
    <property type="interactions" value="6"/>
</dbReference>
<dbReference type="STRING" id="5875.Q4MY95"/>
<dbReference type="EnsemblProtists" id="EAN30414">
    <property type="protein sequence ID" value="EAN30414"/>
    <property type="gene ID" value="TP05_0028"/>
</dbReference>
<dbReference type="GeneID" id="3882257"/>
<dbReference type="KEGG" id="tpv:TP05_0028"/>
<dbReference type="VEuPathDB" id="PiroplasmaDB:TpMuguga_05g00028"/>
<dbReference type="eggNOG" id="KOG0214">
    <property type="taxonomic scope" value="Eukaryota"/>
</dbReference>
<dbReference type="InParanoid" id="Q4MY95"/>
<dbReference type="OMA" id="FMTWEGY"/>
<dbReference type="Proteomes" id="UP000001949">
    <property type="component" value="Unassembled WGS sequence"/>
</dbReference>
<dbReference type="GO" id="GO:0020011">
    <property type="term" value="C:apicoplast"/>
    <property type="evidence" value="ECO:0007669"/>
    <property type="project" value="UniProtKB-SubCell"/>
</dbReference>
<dbReference type="GO" id="GO:0000428">
    <property type="term" value="C:DNA-directed RNA polymerase complex"/>
    <property type="evidence" value="ECO:0007669"/>
    <property type="project" value="UniProtKB-KW"/>
</dbReference>
<dbReference type="GO" id="GO:0005739">
    <property type="term" value="C:mitochondrion"/>
    <property type="evidence" value="ECO:0007669"/>
    <property type="project" value="GOC"/>
</dbReference>
<dbReference type="GO" id="GO:0003677">
    <property type="term" value="F:DNA binding"/>
    <property type="evidence" value="ECO:0007669"/>
    <property type="project" value="InterPro"/>
</dbReference>
<dbReference type="GO" id="GO:0003899">
    <property type="term" value="F:DNA-directed RNA polymerase activity"/>
    <property type="evidence" value="ECO:0007669"/>
    <property type="project" value="UniProtKB-EC"/>
</dbReference>
<dbReference type="GO" id="GO:0032549">
    <property type="term" value="F:ribonucleoside binding"/>
    <property type="evidence" value="ECO:0007669"/>
    <property type="project" value="InterPro"/>
</dbReference>
<dbReference type="GO" id="GO:0006351">
    <property type="term" value="P:DNA-templated transcription"/>
    <property type="evidence" value="ECO:0007669"/>
    <property type="project" value="InterPro"/>
</dbReference>
<dbReference type="Gene3D" id="2.40.50.100">
    <property type="match status" value="1"/>
</dbReference>
<dbReference type="Gene3D" id="3.90.1100.10">
    <property type="match status" value="1"/>
</dbReference>
<dbReference type="Gene3D" id="2.40.270.10">
    <property type="entry name" value="DNA-directed RNA polymerase, subunit 2, domain 6"/>
    <property type="match status" value="1"/>
</dbReference>
<dbReference type="Gene3D" id="3.90.1800.10">
    <property type="entry name" value="RNA polymerase alpha subunit dimerisation domain"/>
    <property type="match status" value="1"/>
</dbReference>
<dbReference type="InterPro" id="IPR015712">
    <property type="entry name" value="DNA-dir_RNA_pol_su2"/>
</dbReference>
<dbReference type="InterPro" id="IPR007120">
    <property type="entry name" value="DNA-dir_RNAP_su2_dom"/>
</dbReference>
<dbReference type="InterPro" id="IPR037033">
    <property type="entry name" value="DNA-dir_RNAP_su2_hyb_sf"/>
</dbReference>
<dbReference type="InterPro" id="IPR007121">
    <property type="entry name" value="RNA_pol_bsu_CS"/>
</dbReference>
<dbReference type="InterPro" id="IPR007645">
    <property type="entry name" value="RNA_pol_Rpb2_3"/>
</dbReference>
<dbReference type="PANTHER" id="PTHR20856">
    <property type="entry name" value="DNA-DIRECTED RNA POLYMERASE I SUBUNIT 2"/>
    <property type="match status" value="1"/>
</dbReference>
<dbReference type="Pfam" id="PF04565">
    <property type="entry name" value="RNA_pol_Rpb2_3"/>
    <property type="match status" value="1"/>
</dbReference>
<dbReference type="Pfam" id="PF00562">
    <property type="entry name" value="RNA_pol_Rpb2_6"/>
    <property type="match status" value="1"/>
</dbReference>
<dbReference type="SUPFAM" id="SSF64484">
    <property type="entry name" value="beta and beta-prime subunits of DNA dependent RNA-polymerase"/>
    <property type="match status" value="1"/>
</dbReference>
<dbReference type="PROSITE" id="PS01166">
    <property type="entry name" value="RNA_POL_BETA"/>
    <property type="match status" value="1"/>
</dbReference>
<sequence>MNCTVGNNIYHTYINYFVNNIYNSLSRNINSKINKYYNYYKKSKIFKNIKFYFNLLTFESNYCCDSGQNKYLYDGYNSYYFINIPLQIKFNNLKSRFINYNIINIPKINQSGDIILNGYLRLPILYLQLATNNISYIFNEKITRTYFIKIKNNIYLYIYLYDDFITVYINSYKIKNDLFSMYNNVSFKNKYINFSKIDNVIYVMNLKNNNIKYHIFDKTININNFVNNTMFMDILSIVNKFLNLNLKKKFIQSSNNLINKSTNSVLKTIFRQFTKSVTIFDIEKYCDKLLYKKKIFRSFNIVLFKEHLLVNPVIHYTDQLNVLSYLTNKFKINIFGYSNSSNDKFKVSTNLRKIQSDYIGFINIVNTPDGDTCGLISKLANNTILDKFKLKLINCNNEYFENFTKIDITSKNLYNMTSNNFINIKKNSTFKVKQIEVFKNNEFKLINFDKNKTNKNLNVFNTLSITELIIPFLFNNDPCRGLMGSKMHTQALPLIYNEHPYVMTKYNHMNGLLFNKCITSLCEGIIVSVNNYKIIVMDDKNRYLHYYLYPFNVLDYNSFVSYKPIVWVGEKINIGKILALPSDLKHSEFTLGVNNLLNYSFYNGYEHEDAIVINKNLIIEDILTSISFDVYEEYLSINKLDYVELTLRHLLEYNRYNRYLINEVGVSSNQDYMLFGDILSTKIRYELSLSKNKKFFKVFKLIFKENKKLIVYTKPLTIKRGGEGRLIKYEILGYSKFRQLDAMYPEINVSYLTLRFFIFKIDRINIGDKLCGRHGNKGVVSKIVDNIDLPYTFRGLCPYSITSPIGALARINLGQFLEGSCGYFGLNFNCRIKAPINLYNYHLYSNMYLKNIFNSLNVYNNSYINFSIEKYLRDFKTGYQLKNFNLMLMPYFLKLMHTSKSKFQYRTVGKYSSLTQQPVKGKRVNGSQKFGEMEVWALESHGSAYTIRELGYIKTNVKYFKKFEHKGYKGSETFKVLTLELKNVLININRVDNYSYFNQKIKYNY</sequence>
<feature type="chain" id="PRO_0000232685" description="DNA-directed RNA polymerase subunit beta">
    <location>
        <begin position="1"/>
        <end position="1005"/>
    </location>
</feature>
<keyword id="KW-0933">Apicoplast</keyword>
<keyword id="KW-0240">DNA-directed RNA polymerase</keyword>
<keyword id="KW-0548">Nucleotidyltransferase</keyword>
<keyword id="KW-0934">Plastid</keyword>
<keyword id="KW-1185">Reference proteome</keyword>
<keyword id="KW-0804">Transcription</keyword>
<keyword id="KW-0808">Transferase</keyword>
<reference key="1">
    <citation type="journal article" date="2005" name="Science">
        <title>Genome sequence of Theileria parva, a bovine pathogen that transforms lymphocytes.</title>
        <authorList>
            <person name="Gardner M.J."/>
            <person name="Bishop R."/>
            <person name="Shah T."/>
            <person name="de Villiers E.P."/>
            <person name="Carlton J.M."/>
            <person name="Hall N."/>
            <person name="Ren Q."/>
            <person name="Paulsen I.T."/>
            <person name="Pain A."/>
            <person name="Berriman M."/>
            <person name="Wilson R.J.M."/>
            <person name="Sato S."/>
            <person name="Ralph S.A."/>
            <person name="Mann D.J."/>
            <person name="Xiong Z."/>
            <person name="Shallom S.J."/>
            <person name="Weidman J."/>
            <person name="Jiang L."/>
            <person name="Lynn J."/>
            <person name="Weaver B."/>
            <person name="Shoaibi A."/>
            <person name="Domingo A.R."/>
            <person name="Wasawo D."/>
            <person name="Crabtree J."/>
            <person name="Wortman J.R."/>
            <person name="Haas B."/>
            <person name="Angiuoli S.V."/>
            <person name="Creasy T.H."/>
            <person name="Lu C."/>
            <person name="Suh B."/>
            <person name="Silva J.C."/>
            <person name="Utterback T.R."/>
            <person name="Feldblyum T.V."/>
            <person name="Pertea M."/>
            <person name="Allen J."/>
            <person name="Nierman W.C."/>
            <person name="Taracha E.L.N."/>
            <person name="Salzberg S.L."/>
            <person name="White O.R."/>
            <person name="Fitzhugh H.A."/>
            <person name="Morzaria S."/>
            <person name="Venter J.C."/>
            <person name="Fraser C.M."/>
            <person name="Nene V."/>
        </authorList>
    </citation>
    <scope>NUCLEOTIDE SEQUENCE [LARGE SCALE GENOMIC DNA]</scope>
    <source>
        <strain>Muguga</strain>
    </source>
</reference>
<organism>
    <name type="scientific">Theileria parva</name>
    <name type="common">East coast fever infection agent</name>
    <dbReference type="NCBI Taxonomy" id="5875"/>
    <lineage>
        <taxon>Eukaryota</taxon>
        <taxon>Sar</taxon>
        <taxon>Alveolata</taxon>
        <taxon>Apicomplexa</taxon>
        <taxon>Aconoidasida</taxon>
        <taxon>Piroplasmida</taxon>
        <taxon>Theileriidae</taxon>
        <taxon>Theileria</taxon>
    </lineage>
</organism>
<comment type="function">
    <text evidence="1">DNA-dependent RNA polymerase catalyzes the transcription of DNA into RNA using the four ribonucleoside triphosphates as substrates.</text>
</comment>
<comment type="catalytic activity">
    <reaction>
        <text>RNA(n) + a ribonucleoside 5'-triphosphate = RNA(n+1) + diphosphate</text>
        <dbReference type="Rhea" id="RHEA:21248"/>
        <dbReference type="Rhea" id="RHEA-COMP:14527"/>
        <dbReference type="Rhea" id="RHEA-COMP:17342"/>
        <dbReference type="ChEBI" id="CHEBI:33019"/>
        <dbReference type="ChEBI" id="CHEBI:61557"/>
        <dbReference type="ChEBI" id="CHEBI:140395"/>
        <dbReference type="EC" id="2.7.7.6"/>
    </reaction>
</comment>
<comment type="subunit">
    <text evidence="2">In plastids the minimal PEP RNA polymerase catalytic core is composed of four subunits: alpha, beta, beta', and beta''. When a (nuclear-encoded) sigma factor is associated with the core the holoenzyme is formed, which can initiate transcription (Potential).</text>
</comment>
<comment type="subcellular location">
    <subcellularLocation>
        <location>Plastid</location>
        <location>Apicoplast</location>
    </subcellularLocation>
</comment>
<comment type="similarity">
    <text evidence="2">Belongs to the RNA polymerase beta chain family.</text>
</comment>
<name>RPOB_THEPA</name>